<dbReference type="EMBL" id="CP001068">
    <property type="protein sequence ID" value="ACD28411.1"/>
    <property type="molecule type" value="Genomic_DNA"/>
</dbReference>
<dbReference type="SMR" id="B2UEL1"/>
<dbReference type="STRING" id="402626.Rpic_3289"/>
<dbReference type="KEGG" id="rpi:Rpic_3289"/>
<dbReference type="eggNOG" id="COG0255">
    <property type="taxonomic scope" value="Bacteria"/>
</dbReference>
<dbReference type="HOGENOM" id="CLU_158491_1_1_4"/>
<dbReference type="GO" id="GO:0022625">
    <property type="term" value="C:cytosolic large ribosomal subunit"/>
    <property type="evidence" value="ECO:0007669"/>
    <property type="project" value="TreeGrafter"/>
</dbReference>
<dbReference type="GO" id="GO:0003735">
    <property type="term" value="F:structural constituent of ribosome"/>
    <property type="evidence" value="ECO:0007669"/>
    <property type="project" value="InterPro"/>
</dbReference>
<dbReference type="GO" id="GO:0006412">
    <property type="term" value="P:translation"/>
    <property type="evidence" value="ECO:0007669"/>
    <property type="project" value="UniProtKB-UniRule"/>
</dbReference>
<dbReference type="CDD" id="cd00427">
    <property type="entry name" value="Ribosomal_L29_HIP"/>
    <property type="match status" value="1"/>
</dbReference>
<dbReference type="FunFam" id="1.10.287.310:FF:000001">
    <property type="entry name" value="50S ribosomal protein L29"/>
    <property type="match status" value="1"/>
</dbReference>
<dbReference type="Gene3D" id="1.10.287.310">
    <property type="match status" value="1"/>
</dbReference>
<dbReference type="HAMAP" id="MF_00374">
    <property type="entry name" value="Ribosomal_uL29"/>
    <property type="match status" value="1"/>
</dbReference>
<dbReference type="InterPro" id="IPR050063">
    <property type="entry name" value="Ribosomal_protein_uL29"/>
</dbReference>
<dbReference type="InterPro" id="IPR001854">
    <property type="entry name" value="Ribosomal_uL29"/>
</dbReference>
<dbReference type="InterPro" id="IPR018254">
    <property type="entry name" value="Ribosomal_uL29_CS"/>
</dbReference>
<dbReference type="InterPro" id="IPR036049">
    <property type="entry name" value="Ribosomal_uL29_sf"/>
</dbReference>
<dbReference type="NCBIfam" id="TIGR00012">
    <property type="entry name" value="L29"/>
    <property type="match status" value="1"/>
</dbReference>
<dbReference type="PANTHER" id="PTHR10916">
    <property type="entry name" value="60S RIBOSOMAL PROTEIN L35/50S RIBOSOMAL PROTEIN L29"/>
    <property type="match status" value="1"/>
</dbReference>
<dbReference type="PANTHER" id="PTHR10916:SF0">
    <property type="entry name" value="LARGE RIBOSOMAL SUBUNIT PROTEIN UL29C"/>
    <property type="match status" value="1"/>
</dbReference>
<dbReference type="Pfam" id="PF00831">
    <property type="entry name" value="Ribosomal_L29"/>
    <property type="match status" value="1"/>
</dbReference>
<dbReference type="SUPFAM" id="SSF46561">
    <property type="entry name" value="Ribosomal protein L29 (L29p)"/>
    <property type="match status" value="1"/>
</dbReference>
<dbReference type="PROSITE" id="PS00579">
    <property type="entry name" value="RIBOSOMAL_L29"/>
    <property type="match status" value="1"/>
</dbReference>
<feature type="chain" id="PRO_1000121803" description="Large ribosomal subunit protein uL29">
    <location>
        <begin position="1"/>
        <end position="64"/>
    </location>
</feature>
<evidence type="ECO:0000255" key="1">
    <source>
        <dbReference type="HAMAP-Rule" id="MF_00374"/>
    </source>
</evidence>
<evidence type="ECO:0000305" key="2"/>
<gene>
    <name evidence="1" type="primary">rpmC</name>
    <name type="ordered locus">Rpic_3289</name>
</gene>
<reference key="1">
    <citation type="submission" date="2008-05" db="EMBL/GenBank/DDBJ databases">
        <title>Complete sequence of chromosome 1 of Ralstonia pickettii 12J.</title>
        <authorList>
            <person name="Lucas S."/>
            <person name="Copeland A."/>
            <person name="Lapidus A."/>
            <person name="Glavina del Rio T."/>
            <person name="Dalin E."/>
            <person name="Tice H."/>
            <person name="Bruce D."/>
            <person name="Goodwin L."/>
            <person name="Pitluck S."/>
            <person name="Meincke L."/>
            <person name="Brettin T."/>
            <person name="Detter J.C."/>
            <person name="Han C."/>
            <person name="Kuske C.R."/>
            <person name="Schmutz J."/>
            <person name="Larimer F."/>
            <person name="Land M."/>
            <person name="Hauser L."/>
            <person name="Kyrpides N."/>
            <person name="Mikhailova N."/>
            <person name="Marsh T."/>
            <person name="Richardson P."/>
        </authorList>
    </citation>
    <scope>NUCLEOTIDE SEQUENCE [LARGE SCALE GENOMIC DNA]</scope>
    <source>
        <strain>12J</strain>
    </source>
</reference>
<comment type="similarity">
    <text evidence="1">Belongs to the universal ribosomal protein uL29 family.</text>
</comment>
<protein>
    <recommendedName>
        <fullName evidence="1">Large ribosomal subunit protein uL29</fullName>
    </recommendedName>
    <alternativeName>
        <fullName evidence="2">50S ribosomal protein L29</fullName>
    </alternativeName>
</protein>
<sequence>MKASELRDKDVAGLNQELSELLKAQFGLRMQKATQQLQNTSQLKKVRRDIARVRTVLGQKGNQK</sequence>
<accession>B2UEL1</accession>
<proteinExistence type="inferred from homology"/>
<keyword id="KW-0687">Ribonucleoprotein</keyword>
<keyword id="KW-0689">Ribosomal protein</keyword>
<organism>
    <name type="scientific">Ralstonia pickettii (strain 12J)</name>
    <dbReference type="NCBI Taxonomy" id="402626"/>
    <lineage>
        <taxon>Bacteria</taxon>
        <taxon>Pseudomonadati</taxon>
        <taxon>Pseudomonadota</taxon>
        <taxon>Betaproteobacteria</taxon>
        <taxon>Burkholderiales</taxon>
        <taxon>Burkholderiaceae</taxon>
        <taxon>Ralstonia</taxon>
    </lineage>
</organism>
<name>RL29_RALPJ</name>